<organism>
    <name type="scientific">Saccharomyces cerevisiae (strain JAY291)</name>
    <name type="common">Baker's yeast</name>
    <dbReference type="NCBI Taxonomy" id="574961"/>
    <lineage>
        <taxon>Eukaryota</taxon>
        <taxon>Fungi</taxon>
        <taxon>Dikarya</taxon>
        <taxon>Ascomycota</taxon>
        <taxon>Saccharomycotina</taxon>
        <taxon>Saccharomycetes</taxon>
        <taxon>Saccharomycetales</taxon>
        <taxon>Saccharomycetaceae</taxon>
        <taxon>Saccharomyces</taxon>
    </lineage>
</organism>
<proteinExistence type="inferred from homology"/>
<feature type="transit peptide" description="Mitochondrion" evidence="2">
    <location>
        <begin position="1"/>
        <end position="111"/>
    </location>
</feature>
<feature type="chain" id="PRO_0000399589" description="Altered inheritance of mitochondria protein 24, mitochondrial">
    <location>
        <begin position="112"/>
        <end position="394"/>
    </location>
</feature>
<protein>
    <recommendedName>
        <fullName>Altered inheritance of mitochondria protein 24, mitochondrial</fullName>
    </recommendedName>
</protein>
<gene>
    <name type="primary">AIM24</name>
    <name type="synonym">FMP26</name>
    <name type="ORF">C1Q_01378</name>
</gene>
<name>AIM24_YEAS2</name>
<comment type="subcellular location">
    <subcellularLocation>
        <location evidence="1">Mitochondrion</location>
    </subcellularLocation>
</comment>
<comment type="similarity">
    <text evidence="3">Belongs to the AIM24 family.</text>
</comment>
<sequence>MISPRVNTRVWQRSISLLSPQAAKTESNVVTKERTYIENLSKDIATSRFRLVDENGKIASITVQPDIPICIKKDCLVSIHNLNHLSLSYKWLNFWSNLIKFRSFKSSLFHRIIGSSVLEILAAPNFQISRRPFDSSRSLSVLNLTGTKDWNVFGKDSIIAFEQNSSLEIKSPIFPSARSLVSNSSKSQLPRKFQILNGRGNVLVCGGGLVYSIELIDECDKILVNSRNILAINGQSQLDIANSVERQELHVEGAYVGDSSNDTVAPKFIKNQTLKSAYGHTVQFFKRMRSWIRNQYEKRYIYGVDSYFMKIKGPRTILIQTHEMTTSKDNILTKLTSKSHVKKSTVNDNGVNLEKQVANDVNSKIIELANRPSLFIATVSQDGRVDFQSTSKFT</sequence>
<accession>C7GMC5</accession>
<reference key="1">
    <citation type="journal article" date="2009" name="Genome Res.">
        <title>Genome structure of a Saccharomyces cerevisiae strain widely used in bioethanol production.</title>
        <authorList>
            <person name="Argueso J.L."/>
            <person name="Carazzolle M.F."/>
            <person name="Mieczkowski P.A."/>
            <person name="Duarte F.M."/>
            <person name="Netto O.V.C."/>
            <person name="Missawa S.K."/>
            <person name="Galzerani F."/>
            <person name="Costa G.G.L."/>
            <person name="Vidal R.O."/>
            <person name="Noronha M.F."/>
            <person name="Dominska M."/>
            <person name="Andrietta M.G.S."/>
            <person name="Andrietta S.R."/>
            <person name="Cunha A.F."/>
            <person name="Gomes L.H."/>
            <person name="Tavares F.C.A."/>
            <person name="Alcarde A.R."/>
            <person name="Dietrich F.S."/>
            <person name="McCusker J.H."/>
            <person name="Petes T.D."/>
            <person name="Pereira G.A.G."/>
        </authorList>
    </citation>
    <scope>NUCLEOTIDE SEQUENCE [LARGE SCALE GENOMIC DNA]</scope>
    <source>
        <strain>JAY291</strain>
    </source>
</reference>
<dbReference type="EMBL" id="ACFL01000054">
    <property type="protein sequence ID" value="EEU08058.1"/>
    <property type="molecule type" value="Genomic_DNA"/>
</dbReference>
<dbReference type="Proteomes" id="UP000008073">
    <property type="component" value="Unassembled WGS sequence"/>
</dbReference>
<dbReference type="GO" id="GO:0005743">
    <property type="term" value="C:mitochondrial inner membrane"/>
    <property type="evidence" value="ECO:0007669"/>
    <property type="project" value="TreeGrafter"/>
</dbReference>
<dbReference type="GO" id="GO:0007007">
    <property type="term" value="P:inner mitochondrial membrane organization"/>
    <property type="evidence" value="ECO:0007669"/>
    <property type="project" value="TreeGrafter"/>
</dbReference>
<dbReference type="Gene3D" id="3.60.160.10">
    <property type="entry name" value="Mitochondrial biogenesis AIM24"/>
    <property type="match status" value="1"/>
</dbReference>
<dbReference type="InterPro" id="IPR002838">
    <property type="entry name" value="AIM24"/>
</dbReference>
<dbReference type="InterPro" id="IPR036983">
    <property type="entry name" value="AIM24_sf"/>
</dbReference>
<dbReference type="PANTHER" id="PTHR36959">
    <property type="entry name" value="ALTERED INHERITANCE OF MITOCHONDRIA PROTEIN 24, MITOCHONDRIAL"/>
    <property type="match status" value="1"/>
</dbReference>
<dbReference type="PANTHER" id="PTHR36959:SF2">
    <property type="entry name" value="ALTERED INHERITANCE OF MITOCHONDRIA PROTEIN 24, MITOCHONDRIAL"/>
    <property type="match status" value="1"/>
</dbReference>
<dbReference type="Pfam" id="PF01987">
    <property type="entry name" value="AIM24"/>
    <property type="match status" value="1"/>
</dbReference>
<keyword id="KW-0496">Mitochondrion</keyword>
<keyword id="KW-0809">Transit peptide</keyword>
<evidence type="ECO:0000250" key="1"/>
<evidence type="ECO:0000255" key="2"/>
<evidence type="ECO:0000305" key="3"/>